<gene>
    <name evidence="1" type="primary">rpl16</name>
</gene>
<proteinExistence type="inferred from homology"/>
<name>RK16_MESVI</name>
<feature type="chain" id="PRO_0000062291" description="Large ribosomal subunit protein uL16c">
    <location>
        <begin position="1"/>
        <end position="136"/>
    </location>
</feature>
<protein>
    <recommendedName>
        <fullName evidence="1">Large ribosomal subunit protein uL16c</fullName>
    </recommendedName>
    <alternativeName>
        <fullName evidence="2">50S ribosomal protein L16, chloroplastic</fullName>
    </alternativeName>
</protein>
<geneLocation type="chloroplast"/>
<reference key="1">
    <citation type="journal article" date="2000" name="Nature">
        <title>Ancestral chloroplast genome in Mesostigma viride reveals an early branch of green plant evolution.</title>
        <authorList>
            <person name="Lemieux C."/>
            <person name="Otis C."/>
            <person name="Turmel M."/>
        </authorList>
    </citation>
    <scope>NUCLEOTIDE SEQUENCE [LARGE SCALE GENOMIC DNA]</scope>
    <source>
        <strain>NIES-296 / KY-14 / CCMP 2046</strain>
    </source>
</reference>
<organism>
    <name type="scientific">Mesostigma viride</name>
    <name type="common">Green alga</name>
    <dbReference type="NCBI Taxonomy" id="41882"/>
    <lineage>
        <taxon>Eukaryota</taxon>
        <taxon>Viridiplantae</taxon>
        <taxon>Streptophyta</taxon>
        <taxon>Mesostigmatophyceae</taxon>
        <taxon>Mesostigmatales</taxon>
        <taxon>Mesostigmataceae</taxon>
        <taxon>Mesostigma</taxon>
    </lineage>
</organism>
<dbReference type="EMBL" id="AF166114">
    <property type="protein sequence ID" value="AAF43808.1"/>
    <property type="molecule type" value="Genomic_DNA"/>
</dbReference>
<dbReference type="RefSeq" id="NP_038367.1">
    <property type="nucleotide sequence ID" value="NC_002186.1"/>
</dbReference>
<dbReference type="SMR" id="Q9MUU3"/>
<dbReference type="GeneID" id="800905"/>
<dbReference type="GO" id="GO:0009507">
    <property type="term" value="C:chloroplast"/>
    <property type="evidence" value="ECO:0007669"/>
    <property type="project" value="UniProtKB-SubCell"/>
</dbReference>
<dbReference type="GO" id="GO:0005762">
    <property type="term" value="C:mitochondrial large ribosomal subunit"/>
    <property type="evidence" value="ECO:0007669"/>
    <property type="project" value="TreeGrafter"/>
</dbReference>
<dbReference type="GO" id="GO:0019843">
    <property type="term" value="F:rRNA binding"/>
    <property type="evidence" value="ECO:0007669"/>
    <property type="project" value="InterPro"/>
</dbReference>
<dbReference type="GO" id="GO:0003735">
    <property type="term" value="F:structural constituent of ribosome"/>
    <property type="evidence" value="ECO:0007669"/>
    <property type="project" value="InterPro"/>
</dbReference>
<dbReference type="GO" id="GO:0032543">
    <property type="term" value="P:mitochondrial translation"/>
    <property type="evidence" value="ECO:0007669"/>
    <property type="project" value="TreeGrafter"/>
</dbReference>
<dbReference type="CDD" id="cd01433">
    <property type="entry name" value="Ribosomal_L16_L10e"/>
    <property type="match status" value="1"/>
</dbReference>
<dbReference type="FunFam" id="3.90.1170.10:FF:000001">
    <property type="entry name" value="50S ribosomal protein L16"/>
    <property type="match status" value="1"/>
</dbReference>
<dbReference type="Gene3D" id="3.90.1170.10">
    <property type="entry name" value="Ribosomal protein L10e/L16"/>
    <property type="match status" value="1"/>
</dbReference>
<dbReference type="HAMAP" id="MF_01342">
    <property type="entry name" value="Ribosomal_uL16"/>
    <property type="match status" value="1"/>
</dbReference>
<dbReference type="InterPro" id="IPR047873">
    <property type="entry name" value="Ribosomal_uL16"/>
</dbReference>
<dbReference type="InterPro" id="IPR000114">
    <property type="entry name" value="Ribosomal_uL16_bact-type"/>
</dbReference>
<dbReference type="InterPro" id="IPR020798">
    <property type="entry name" value="Ribosomal_uL16_CS"/>
</dbReference>
<dbReference type="InterPro" id="IPR016180">
    <property type="entry name" value="Ribosomal_uL16_dom"/>
</dbReference>
<dbReference type="InterPro" id="IPR036920">
    <property type="entry name" value="Ribosomal_uL16_sf"/>
</dbReference>
<dbReference type="NCBIfam" id="TIGR01164">
    <property type="entry name" value="rplP_bact"/>
    <property type="match status" value="1"/>
</dbReference>
<dbReference type="PANTHER" id="PTHR12220">
    <property type="entry name" value="50S/60S RIBOSOMAL PROTEIN L16"/>
    <property type="match status" value="1"/>
</dbReference>
<dbReference type="PANTHER" id="PTHR12220:SF13">
    <property type="entry name" value="LARGE RIBOSOMAL SUBUNIT PROTEIN UL16M"/>
    <property type="match status" value="1"/>
</dbReference>
<dbReference type="Pfam" id="PF00252">
    <property type="entry name" value="Ribosomal_L16"/>
    <property type="match status" value="1"/>
</dbReference>
<dbReference type="PRINTS" id="PR00060">
    <property type="entry name" value="RIBOSOMALL16"/>
</dbReference>
<dbReference type="SUPFAM" id="SSF54686">
    <property type="entry name" value="Ribosomal protein L16p/L10e"/>
    <property type="match status" value="1"/>
</dbReference>
<dbReference type="PROSITE" id="PS00586">
    <property type="entry name" value="RIBOSOMAL_L16_1"/>
    <property type="match status" value="1"/>
</dbReference>
<dbReference type="PROSITE" id="PS00701">
    <property type="entry name" value="RIBOSOMAL_L16_2"/>
    <property type="match status" value="1"/>
</dbReference>
<keyword id="KW-0150">Chloroplast</keyword>
<keyword id="KW-0934">Plastid</keyword>
<keyword id="KW-0687">Ribonucleoprotein</keyword>
<keyword id="KW-0689">Ribosomal protein</keyword>
<accession>Q9MUU3</accession>
<evidence type="ECO:0000255" key="1">
    <source>
        <dbReference type="HAMAP-Rule" id="MF_01342"/>
    </source>
</evidence>
<evidence type="ECO:0000305" key="2"/>
<comment type="subunit">
    <text evidence="1">Part of the 50S ribosomal subunit.</text>
</comment>
<comment type="subcellular location">
    <subcellularLocation>
        <location>Plastid</location>
        <location>Chloroplast</location>
    </subcellularLocation>
</comment>
<comment type="similarity">
    <text evidence="1">Belongs to the universal ribosomal protein uL16 family.</text>
</comment>
<sequence length="136" mass="15448">MLSPKRTKFRRHHRGKMRGVATRGNKVSFGDFGLKTLEPGWLTSRQIEAGRRAMTRYTRRGGQLWIRVFPDKPVTIRPAETRMGSGKGSPEYWVAVVKPGTILYEMKGVTPEIARSAMRVAGFKMPVKTQFVVRDV</sequence>